<keyword id="KW-0025">Alternative splicing</keyword>
<keyword id="KW-0929">Antimicrobial</keyword>
<keyword id="KW-1015">Disulfide bond</keyword>
<keyword id="KW-0295">Fungicide</keyword>
<keyword id="KW-0611">Plant defense</keyword>
<keyword id="KW-1185">Reference proteome</keyword>
<keyword id="KW-0964">Secreted</keyword>
<keyword id="KW-0732">Signal</keyword>
<comment type="subcellular location">
    <subcellularLocation>
        <location evidence="1">Secreted</location>
    </subcellularLocation>
</comment>
<comment type="alternative products">
    <event type="alternative splicing"/>
    <isoform>
        <id>Q2V4N4-1</id>
        <name>1</name>
        <sequence type="displayed"/>
    </isoform>
    <text>A number of isoforms are produced. According to EST sequences.</text>
</comment>
<comment type="similarity">
    <text evidence="3">Belongs to the DEFL family.</text>
</comment>
<comment type="caution">
    <text evidence="3">Lacks 1 of the 4 disulfide bonds, which are conserved features of the family.</text>
</comment>
<gene>
    <name type="ordered locus">At1g13609</name>
    <name type="ORF">F13B4</name>
    <name type="ORF">F21F23</name>
</gene>
<proteinExistence type="inferred from homology"/>
<feature type="signal peptide" evidence="2">
    <location>
        <begin position="1"/>
        <end position="24"/>
    </location>
</feature>
<feature type="chain" id="PRO_0000379747" description="Defensin-like protein 287">
    <location>
        <begin position="25"/>
        <end position="78"/>
    </location>
</feature>
<feature type="disulfide bond" evidence="1">
    <location>
        <begin position="39"/>
        <end position="59"/>
    </location>
</feature>
<feature type="disulfide bond" evidence="1">
    <location>
        <begin position="45"/>
        <end position="64"/>
    </location>
</feature>
<feature type="disulfide bond" evidence="1">
    <location>
        <begin position="51"/>
        <end position="66"/>
    </location>
</feature>
<accession>Q2V4N4</accession>
<organism>
    <name type="scientific">Arabidopsis thaliana</name>
    <name type="common">Mouse-ear cress</name>
    <dbReference type="NCBI Taxonomy" id="3702"/>
    <lineage>
        <taxon>Eukaryota</taxon>
        <taxon>Viridiplantae</taxon>
        <taxon>Streptophyta</taxon>
        <taxon>Embryophyta</taxon>
        <taxon>Tracheophyta</taxon>
        <taxon>Spermatophyta</taxon>
        <taxon>Magnoliopsida</taxon>
        <taxon>eudicotyledons</taxon>
        <taxon>Gunneridae</taxon>
        <taxon>Pentapetalae</taxon>
        <taxon>rosids</taxon>
        <taxon>malvids</taxon>
        <taxon>Brassicales</taxon>
        <taxon>Brassicaceae</taxon>
        <taxon>Camelineae</taxon>
        <taxon>Arabidopsis</taxon>
    </lineage>
</organism>
<name>DF287_ARATH</name>
<sequence>MNNLRVIMSVLLAVLVFTATVSESAEEMGKGEVTISLRCKTKTECLKNIACEACVDCRCDKGICKCHGFTAETNNPTV</sequence>
<protein>
    <recommendedName>
        <fullName>Defensin-like protein 287</fullName>
    </recommendedName>
</protein>
<reference key="1">
    <citation type="journal article" date="2000" name="Nature">
        <title>Sequence and analysis of chromosome 1 of the plant Arabidopsis thaliana.</title>
        <authorList>
            <person name="Theologis A."/>
            <person name="Ecker J.R."/>
            <person name="Palm C.J."/>
            <person name="Federspiel N.A."/>
            <person name="Kaul S."/>
            <person name="White O."/>
            <person name="Alonso J."/>
            <person name="Altafi H."/>
            <person name="Araujo R."/>
            <person name="Bowman C.L."/>
            <person name="Brooks S.Y."/>
            <person name="Buehler E."/>
            <person name="Chan A."/>
            <person name="Chao Q."/>
            <person name="Chen H."/>
            <person name="Cheuk R.F."/>
            <person name="Chin C.W."/>
            <person name="Chung M.K."/>
            <person name="Conn L."/>
            <person name="Conway A.B."/>
            <person name="Conway A.R."/>
            <person name="Creasy T.H."/>
            <person name="Dewar K."/>
            <person name="Dunn P."/>
            <person name="Etgu P."/>
            <person name="Feldblyum T.V."/>
            <person name="Feng J.-D."/>
            <person name="Fong B."/>
            <person name="Fujii C.Y."/>
            <person name="Gill J.E."/>
            <person name="Goldsmith A.D."/>
            <person name="Haas B."/>
            <person name="Hansen N.F."/>
            <person name="Hughes B."/>
            <person name="Huizar L."/>
            <person name="Hunter J.L."/>
            <person name="Jenkins J."/>
            <person name="Johnson-Hopson C."/>
            <person name="Khan S."/>
            <person name="Khaykin E."/>
            <person name="Kim C.J."/>
            <person name="Koo H.L."/>
            <person name="Kremenetskaia I."/>
            <person name="Kurtz D.B."/>
            <person name="Kwan A."/>
            <person name="Lam B."/>
            <person name="Langin-Hooper S."/>
            <person name="Lee A."/>
            <person name="Lee J.M."/>
            <person name="Lenz C.A."/>
            <person name="Li J.H."/>
            <person name="Li Y.-P."/>
            <person name="Lin X."/>
            <person name="Liu S.X."/>
            <person name="Liu Z.A."/>
            <person name="Luros J.S."/>
            <person name="Maiti R."/>
            <person name="Marziali A."/>
            <person name="Militscher J."/>
            <person name="Miranda M."/>
            <person name="Nguyen M."/>
            <person name="Nierman W.C."/>
            <person name="Osborne B.I."/>
            <person name="Pai G."/>
            <person name="Peterson J."/>
            <person name="Pham P.K."/>
            <person name="Rizzo M."/>
            <person name="Rooney T."/>
            <person name="Rowley D."/>
            <person name="Sakano H."/>
            <person name="Salzberg S.L."/>
            <person name="Schwartz J.R."/>
            <person name="Shinn P."/>
            <person name="Southwick A.M."/>
            <person name="Sun H."/>
            <person name="Tallon L.J."/>
            <person name="Tambunga G."/>
            <person name="Toriumi M.J."/>
            <person name="Town C.D."/>
            <person name="Utterback T."/>
            <person name="Van Aken S."/>
            <person name="Vaysberg M."/>
            <person name="Vysotskaia V.S."/>
            <person name="Walker M."/>
            <person name="Wu D."/>
            <person name="Yu G."/>
            <person name="Fraser C.M."/>
            <person name="Venter J.C."/>
            <person name="Davis R.W."/>
        </authorList>
    </citation>
    <scope>NUCLEOTIDE SEQUENCE [LARGE SCALE GENOMIC DNA]</scope>
    <source>
        <strain>cv. Columbia</strain>
    </source>
</reference>
<reference key="2">
    <citation type="journal article" date="2017" name="Plant J.">
        <title>Araport11: a complete reannotation of the Arabidopsis thaliana reference genome.</title>
        <authorList>
            <person name="Cheng C.Y."/>
            <person name="Krishnakumar V."/>
            <person name="Chan A.P."/>
            <person name="Thibaud-Nissen F."/>
            <person name="Schobel S."/>
            <person name="Town C.D."/>
        </authorList>
    </citation>
    <scope>GENOME REANNOTATION</scope>
    <source>
        <strain>cv. Columbia</strain>
    </source>
</reference>
<reference key="3">
    <citation type="journal article" date="2007" name="BMC Genomics">
        <title>Experimental validation of novel genes predicted in the un-annotated regions of the Arabidopsis genome.</title>
        <authorList>
            <person name="Moskal W.A. Jr."/>
            <person name="Wu H.C."/>
            <person name="Underwood B.A."/>
            <person name="Wang W."/>
            <person name="Town C.D."/>
            <person name="Xiao Y.-L."/>
        </authorList>
    </citation>
    <scope>NUCLEOTIDE SEQUENCE [LARGE SCALE MRNA]</scope>
    <source>
        <strain>cv. Columbia</strain>
    </source>
</reference>
<reference key="4">
    <citation type="journal article" date="2005" name="Plant Physiol.">
        <title>Genome organization of more than 300 defensin-like genes in Arabidopsis.</title>
        <authorList>
            <person name="Silverstein K.A.T."/>
            <person name="Graham M.A."/>
            <person name="Paape T.D."/>
            <person name="VandenBosch K.A."/>
        </authorList>
    </citation>
    <scope>GENE FAMILY</scope>
</reference>
<dbReference type="EMBL" id="AC027134">
    <property type="status" value="NOT_ANNOTATED_CDS"/>
    <property type="molecule type" value="Genomic_DNA"/>
</dbReference>
<dbReference type="EMBL" id="AC027656">
    <property type="status" value="NOT_ANNOTATED_CDS"/>
    <property type="molecule type" value="Genomic_DNA"/>
</dbReference>
<dbReference type="EMBL" id="CP002684">
    <property type="protein sequence ID" value="AEE29044.1"/>
    <property type="molecule type" value="Genomic_DNA"/>
</dbReference>
<dbReference type="EMBL" id="EF182860">
    <property type="status" value="NOT_ANNOTATED_CDS"/>
    <property type="molecule type" value="mRNA"/>
</dbReference>
<dbReference type="RefSeq" id="NP_001031041.1">
    <molecule id="Q2V4N4-1"/>
    <property type="nucleotide sequence ID" value="NM_001035964.3"/>
</dbReference>
<dbReference type="SMR" id="Q2V4N4"/>
<dbReference type="STRING" id="3702.Q2V4N4"/>
<dbReference type="PaxDb" id="3702-AT1G13609.1"/>
<dbReference type="ProteomicsDB" id="224644">
    <molecule id="Q2V4N4-1"/>
</dbReference>
<dbReference type="EnsemblPlants" id="AT1G13609.1">
    <molecule id="Q2V4N4-1"/>
    <property type="protein sequence ID" value="AT1G13609.1"/>
    <property type="gene ID" value="AT1G13609"/>
</dbReference>
<dbReference type="GeneID" id="3766721"/>
<dbReference type="Gramene" id="AT1G13609.1">
    <molecule id="Q2V4N4-1"/>
    <property type="protein sequence ID" value="AT1G13609.1"/>
    <property type="gene ID" value="AT1G13609"/>
</dbReference>
<dbReference type="KEGG" id="ath:AT1G13609"/>
<dbReference type="Araport" id="AT1G13609"/>
<dbReference type="TAIR" id="AT1G13609"/>
<dbReference type="HOGENOM" id="CLU_2625318_0_0_1"/>
<dbReference type="InParanoid" id="Q2V4N4"/>
<dbReference type="OMA" id="GICKCHG"/>
<dbReference type="OrthoDB" id="1039495at2759"/>
<dbReference type="PhylomeDB" id="Q2V4N4"/>
<dbReference type="PRO" id="PR:Q2V4N4"/>
<dbReference type="Proteomes" id="UP000006548">
    <property type="component" value="Chromosome 1"/>
</dbReference>
<dbReference type="ExpressionAtlas" id="Q2V4N4">
    <property type="expression patterns" value="baseline and differential"/>
</dbReference>
<dbReference type="GO" id="GO:0005576">
    <property type="term" value="C:extracellular region"/>
    <property type="evidence" value="ECO:0007669"/>
    <property type="project" value="UniProtKB-SubCell"/>
</dbReference>
<dbReference type="GO" id="GO:0050832">
    <property type="term" value="P:defense response to fungus"/>
    <property type="evidence" value="ECO:0007669"/>
    <property type="project" value="UniProtKB-KW"/>
</dbReference>
<dbReference type="GO" id="GO:0031640">
    <property type="term" value="P:killing of cells of another organism"/>
    <property type="evidence" value="ECO:0007669"/>
    <property type="project" value="UniProtKB-KW"/>
</dbReference>
<evidence type="ECO:0000250" key="1"/>
<evidence type="ECO:0000255" key="2"/>
<evidence type="ECO:0000305" key="3"/>